<protein>
    <recommendedName>
        <fullName evidence="1">Large ribosomal subunit protein bL12</fullName>
    </recommendedName>
    <alternativeName>
        <fullName evidence="2">50S ribosomal protein L7/L12</fullName>
    </alternativeName>
</protein>
<organism>
    <name type="scientific">Xanthomonas oryzae pv. oryzae (strain KACC10331 / KXO85)</name>
    <dbReference type="NCBI Taxonomy" id="291331"/>
    <lineage>
        <taxon>Bacteria</taxon>
        <taxon>Pseudomonadati</taxon>
        <taxon>Pseudomonadota</taxon>
        <taxon>Gammaproteobacteria</taxon>
        <taxon>Lysobacterales</taxon>
        <taxon>Lysobacteraceae</taxon>
        <taxon>Xanthomonas</taxon>
    </lineage>
</organism>
<reference key="1">
    <citation type="journal article" date="2005" name="Nucleic Acids Res.">
        <title>The genome sequence of Xanthomonas oryzae pathovar oryzae KACC10331, the bacterial blight pathogen of rice.</title>
        <authorList>
            <person name="Lee B.-M."/>
            <person name="Park Y.-J."/>
            <person name="Park D.-S."/>
            <person name="Kang H.-W."/>
            <person name="Kim J.-G."/>
            <person name="Song E.-S."/>
            <person name="Park I.-C."/>
            <person name="Yoon U.-H."/>
            <person name="Hahn J.-H."/>
            <person name="Koo B.-S."/>
            <person name="Lee G.-B."/>
            <person name="Kim H."/>
            <person name="Park H.-S."/>
            <person name="Yoon K.-O."/>
            <person name="Kim J.-H."/>
            <person name="Jung C.-H."/>
            <person name="Koh N.-H."/>
            <person name="Seo J.-S."/>
            <person name="Go S.-J."/>
        </authorList>
    </citation>
    <scope>NUCLEOTIDE SEQUENCE [LARGE SCALE GENOMIC DNA]</scope>
    <source>
        <strain>KACC10331 / KXO85</strain>
    </source>
</reference>
<sequence>MSLTNEQIVDAIAEKSLMEVMELVKAIEDKFGVSAAAPVAAAAAAGPAAVVEEQTEFTVVLTNPGLNKVTAIKAVRGVTGLGLKEAKDLTEAGGILKEGVSKDEAEKIKKEMTEAGATVEVK</sequence>
<gene>
    <name evidence="1" type="primary">rplL</name>
    <name type="ordered locus">XOO3592</name>
</gene>
<feature type="chain" id="PRO_0000243529" description="Large ribosomal subunit protein bL12">
    <location>
        <begin position="1"/>
        <end position="122"/>
    </location>
</feature>
<name>RL7_XANOR</name>
<keyword id="KW-1185">Reference proteome</keyword>
<keyword id="KW-0687">Ribonucleoprotein</keyword>
<keyword id="KW-0689">Ribosomal protein</keyword>
<comment type="function">
    <text evidence="1">Forms part of the ribosomal stalk which helps the ribosome interact with GTP-bound translation factors. Is thus essential for accurate translation.</text>
</comment>
<comment type="subunit">
    <text evidence="1">Homodimer. Part of the ribosomal stalk of the 50S ribosomal subunit. Forms a multimeric L10(L12)X complex, where L10 forms an elongated spine to which 2 to 4 L12 dimers bind in a sequential fashion. Binds GTP-bound translation factors.</text>
</comment>
<comment type="similarity">
    <text evidence="1">Belongs to the bacterial ribosomal protein bL12 family.</text>
</comment>
<proteinExistence type="inferred from homology"/>
<dbReference type="EMBL" id="AE013598">
    <property type="protein sequence ID" value="AAW76846.1"/>
    <property type="molecule type" value="Genomic_DNA"/>
</dbReference>
<dbReference type="SMR" id="Q5GWS5"/>
<dbReference type="STRING" id="291331.XOO3592"/>
<dbReference type="KEGG" id="xoo:XOO3592"/>
<dbReference type="HOGENOM" id="CLU_086499_3_2_6"/>
<dbReference type="Proteomes" id="UP000006735">
    <property type="component" value="Chromosome"/>
</dbReference>
<dbReference type="GO" id="GO:0022625">
    <property type="term" value="C:cytosolic large ribosomal subunit"/>
    <property type="evidence" value="ECO:0007669"/>
    <property type="project" value="TreeGrafter"/>
</dbReference>
<dbReference type="GO" id="GO:0003729">
    <property type="term" value="F:mRNA binding"/>
    <property type="evidence" value="ECO:0007669"/>
    <property type="project" value="TreeGrafter"/>
</dbReference>
<dbReference type="GO" id="GO:0003735">
    <property type="term" value="F:structural constituent of ribosome"/>
    <property type="evidence" value="ECO:0007669"/>
    <property type="project" value="InterPro"/>
</dbReference>
<dbReference type="GO" id="GO:0006412">
    <property type="term" value="P:translation"/>
    <property type="evidence" value="ECO:0007669"/>
    <property type="project" value="UniProtKB-UniRule"/>
</dbReference>
<dbReference type="CDD" id="cd00387">
    <property type="entry name" value="Ribosomal_L7_L12"/>
    <property type="match status" value="1"/>
</dbReference>
<dbReference type="FunFam" id="1.20.5.710:FF:000003">
    <property type="entry name" value="50S ribosomal protein L7/L12"/>
    <property type="match status" value="1"/>
</dbReference>
<dbReference type="FunFam" id="3.30.1390.10:FF:000001">
    <property type="entry name" value="50S ribosomal protein L7/L12"/>
    <property type="match status" value="1"/>
</dbReference>
<dbReference type="Gene3D" id="3.30.1390.10">
    <property type="match status" value="1"/>
</dbReference>
<dbReference type="Gene3D" id="1.20.5.710">
    <property type="entry name" value="Single helix bin"/>
    <property type="match status" value="1"/>
</dbReference>
<dbReference type="HAMAP" id="MF_00368">
    <property type="entry name" value="Ribosomal_bL12"/>
    <property type="match status" value="1"/>
</dbReference>
<dbReference type="InterPro" id="IPR000206">
    <property type="entry name" value="Ribosomal_bL12"/>
</dbReference>
<dbReference type="InterPro" id="IPR013823">
    <property type="entry name" value="Ribosomal_bL12_C"/>
</dbReference>
<dbReference type="InterPro" id="IPR014719">
    <property type="entry name" value="Ribosomal_bL12_C/ClpS-like"/>
</dbReference>
<dbReference type="InterPro" id="IPR008932">
    <property type="entry name" value="Ribosomal_bL12_oligo"/>
</dbReference>
<dbReference type="InterPro" id="IPR036235">
    <property type="entry name" value="Ribosomal_bL12_oligo_N_sf"/>
</dbReference>
<dbReference type="NCBIfam" id="TIGR00855">
    <property type="entry name" value="L12"/>
    <property type="match status" value="1"/>
</dbReference>
<dbReference type="PANTHER" id="PTHR45987">
    <property type="entry name" value="39S RIBOSOMAL PROTEIN L12"/>
    <property type="match status" value="1"/>
</dbReference>
<dbReference type="PANTHER" id="PTHR45987:SF4">
    <property type="entry name" value="LARGE RIBOSOMAL SUBUNIT PROTEIN BL12M"/>
    <property type="match status" value="1"/>
</dbReference>
<dbReference type="Pfam" id="PF00542">
    <property type="entry name" value="Ribosomal_L12"/>
    <property type="match status" value="1"/>
</dbReference>
<dbReference type="Pfam" id="PF16320">
    <property type="entry name" value="Ribosomal_L12_N"/>
    <property type="match status" value="1"/>
</dbReference>
<dbReference type="SUPFAM" id="SSF54736">
    <property type="entry name" value="ClpS-like"/>
    <property type="match status" value="1"/>
</dbReference>
<dbReference type="SUPFAM" id="SSF48300">
    <property type="entry name" value="Ribosomal protein L7/12, oligomerisation (N-terminal) domain"/>
    <property type="match status" value="1"/>
</dbReference>
<accession>Q5GWS5</accession>
<evidence type="ECO:0000255" key="1">
    <source>
        <dbReference type="HAMAP-Rule" id="MF_00368"/>
    </source>
</evidence>
<evidence type="ECO:0000305" key="2"/>